<feature type="chain" id="PRO_1000140184" description="N-acetyl-D-glucosamine kinase">
    <location>
        <begin position="1"/>
        <end position="303"/>
    </location>
</feature>
<feature type="binding site" evidence="1">
    <location>
        <begin position="4"/>
        <end position="11"/>
    </location>
    <ligand>
        <name>ATP</name>
        <dbReference type="ChEBI" id="CHEBI:30616"/>
    </ligand>
</feature>
<feature type="binding site" evidence="1">
    <location>
        <begin position="133"/>
        <end position="140"/>
    </location>
    <ligand>
        <name>ATP</name>
        <dbReference type="ChEBI" id="CHEBI:30616"/>
    </ligand>
</feature>
<feature type="binding site" evidence="1">
    <location>
        <position position="157"/>
    </location>
    <ligand>
        <name>Zn(2+)</name>
        <dbReference type="ChEBI" id="CHEBI:29105"/>
    </ligand>
</feature>
<feature type="binding site" evidence="1">
    <location>
        <position position="177"/>
    </location>
    <ligand>
        <name>Zn(2+)</name>
        <dbReference type="ChEBI" id="CHEBI:29105"/>
    </ligand>
</feature>
<feature type="binding site" evidence="1">
    <location>
        <position position="179"/>
    </location>
    <ligand>
        <name>Zn(2+)</name>
        <dbReference type="ChEBI" id="CHEBI:29105"/>
    </ligand>
</feature>
<feature type="binding site" evidence="1">
    <location>
        <position position="184"/>
    </location>
    <ligand>
        <name>Zn(2+)</name>
        <dbReference type="ChEBI" id="CHEBI:29105"/>
    </ligand>
</feature>
<reference key="1">
    <citation type="journal article" date="2008" name="J. Bacteriol.">
        <title>The complete genome sequence of Escherichia coli DH10B: insights into the biology of a laboratory workhorse.</title>
        <authorList>
            <person name="Durfee T."/>
            <person name="Nelson R."/>
            <person name="Baldwin S."/>
            <person name="Plunkett G. III"/>
            <person name="Burland V."/>
            <person name="Mau B."/>
            <person name="Petrosino J.F."/>
            <person name="Qin X."/>
            <person name="Muzny D.M."/>
            <person name="Ayele M."/>
            <person name="Gibbs R.A."/>
            <person name="Csorgo B."/>
            <person name="Posfai G."/>
            <person name="Weinstock G.M."/>
            <person name="Blattner F.R."/>
        </authorList>
    </citation>
    <scope>NUCLEOTIDE SEQUENCE [LARGE SCALE GENOMIC DNA]</scope>
    <source>
        <strain>K12 / DH10B</strain>
    </source>
</reference>
<dbReference type="EC" id="2.7.1.59" evidence="1"/>
<dbReference type="EMBL" id="CP000948">
    <property type="protein sequence ID" value="ACB02312.1"/>
    <property type="molecule type" value="Genomic_DNA"/>
</dbReference>
<dbReference type="RefSeq" id="WP_000291270.1">
    <property type="nucleotide sequence ID" value="NC_010473.1"/>
</dbReference>
<dbReference type="SMR" id="B1XA29"/>
<dbReference type="GeneID" id="75171243"/>
<dbReference type="KEGG" id="ecd:ECDH10B_1191"/>
<dbReference type="HOGENOM" id="CLU_036604_0_3_6"/>
<dbReference type="UniPathway" id="UPA00544"/>
<dbReference type="GO" id="GO:0005524">
    <property type="term" value="F:ATP binding"/>
    <property type="evidence" value="ECO:0007669"/>
    <property type="project" value="UniProtKB-UniRule"/>
</dbReference>
<dbReference type="GO" id="GO:0045127">
    <property type="term" value="F:N-acetylglucosamine kinase activity"/>
    <property type="evidence" value="ECO:0007669"/>
    <property type="project" value="UniProtKB-UniRule"/>
</dbReference>
<dbReference type="GO" id="GO:0008270">
    <property type="term" value="F:zinc ion binding"/>
    <property type="evidence" value="ECO:0007669"/>
    <property type="project" value="UniProtKB-UniRule"/>
</dbReference>
<dbReference type="GO" id="GO:0006044">
    <property type="term" value="P:N-acetylglucosamine metabolic process"/>
    <property type="evidence" value="ECO:0007669"/>
    <property type="project" value="UniProtKB-UniRule"/>
</dbReference>
<dbReference type="GO" id="GO:0009254">
    <property type="term" value="P:peptidoglycan turnover"/>
    <property type="evidence" value="ECO:0007669"/>
    <property type="project" value="UniProtKB-UniRule"/>
</dbReference>
<dbReference type="CDD" id="cd24057">
    <property type="entry name" value="ASKHA_NBD_ROK_NAGK"/>
    <property type="match status" value="1"/>
</dbReference>
<dbReference type="FunFam" id="3.30.420.40:FF:000049">
    <property type="entry name" value="N-acetyl-D-glucosamine kinase"/>
    <property type="match status" value="1"/>
</dbReference>
<dbReference type="FunFam" id="3.30.420.40:FF:000051">
    <property type="entry name" value="N-acetyl-D-glucosamine kinase"/>
    <property type="match status" value="1"/>
</dbReference>
<dbReference type="Gene3D" id="3.30.420.40">
    <property type="match status" value="2"/>
</dbReference>
<dbReference type="HAMAP" id="MF_01271">
    <property type="entry name" value="GlcNAc_kinase"/>
    <property type="match status" value="1"/>
</dbReference>
<dbReference type="InterPro" id="IPR043129">
    <property type="entry name" value="ATPase_NBD"/>
</dbReference>
<dbReference type="InterPro" id="IPR023505">
    <property type="entry name" value="N-acetyl-D-glucosamine_kinase"/>
</dbReference>
<dbReference type="InterPro" id="IPR000600">
    <property type="entry name" value="ROK"/>
</dbReference>
<dbReference type="InterPro" id="IPR049874">
    <property type="entry name" value="ROK_cs"/>
</dbReference>
<dbReference type="NCBIfam" id="NF009835">
    <property type="entry name" value="PRK13310.1"/>
    <property type="match status" value="1"/>
</dbReference>
<dbReference type="PANTHER" id="PTHR18964:SF162">
    <property type="entry name" value="N-ACETYL-D-GLUCOSAMINE KINASE"/>
    <property type="match status" value="1"/>
</dbReference>
<dbReference type="PANTHER" id="PTHR18964">
    <property type="entry name" value="ROK (REPRESSOR, ORF, KINASE) FAMILY"/>
    <property type="match status" value="1"/>
</dbReference>
<dbReference type="Pfam" id="PF00480">
    <property type="entry name" value="ROK"/>
    <property type="match status" value="1"/>
</dbReference>
<dbReference type="SUPFAM" id="SSF53067">
    <property type="entry name" value="Actin-like ATPase domain"/>
    <property type="match status" value="1"/>
</dbReference>
<dbReference type="PROSITE" id="PS01125">
    <property type="entry name" value="ROK"/>
    <property type="match status" value="1"/>
</dbReference>
<gene>
    <name evidence="1" type="primary">nagK</name>
    <name type="ordered locus">ECDH10B_1191</name>
</gene>
<name>NAGK_ECODH</name>
<protein>
    <recommendedName>
        <fullName evidence="1">N-acetyl-D-glucosamine kinase</fullName>
        <ecNumber evidence="1">2.7.1.59</ecNumber>
    </recommendedName>
    <alternativeName>
        <fullName evidence="1">GlcNAc kinase</fullName>
    </alternativeName>
</protein>
<proteinExistence type="inferred from homology"/>
<keyword id="KW-0067">ATP-binding</keyword>
<keyword id="KW-0119">Carbohydrate metabolism</keyword>
<keyword id="KW-0418">Kinase</keyword>
<keyword id="KW-0479">Metal-binding</keyword>
<keyword id="KW-0547">Nucleotide-binding</keyword>
<keyword id="KW-0808">Transferase</keyword>
<keyword id="KW-0862">Zinc</keyword>
<organism>
    <name type="scientific">Escherichia coli (strain K12 / DH10B)</name>
    <dbReference type="NCBI Taxonomy" id="316385"/>
    <lineage>
        <taxon>Bacteria</taxon>
        <taxon>Pseudomonadati</taxon>
        <taxon>Pseudomonadota</taxon>
        <taxon>Gammaproteobacteria</taxon>
        <taxon>Enterobacterales</taxon>
        <taxon>Enterobacteriaceae</taxon>
        <taxon>Escherichia</taxon>
    </lineage>
</organism>
<accession>B1XA29</accession>
<sequence length="303" mass="33043">MYYGFDIGGTKIALGVFDSGRQLQWEKRVPTPRDSYDAFLDAVCELVAEADQRFGCKGSVGIGIPGMPETEDGTLYAANVPAASGKPLRADLSARLDRDVRLDNDANCFALSEAWDDEFTQYPLVMGLILGTGVGGGLIFNGKPITGKSYITGEFGHMRLPVDALTMMGLDFPLRRCGCGQHGCIENYLSGRGFAWLYQHYYHQPLQAPEIIALYDQGDEQARAHVERYLDLLAVCLGNILTIVDPDLVVIGGGLSNFPAITTQLADRLPRHLLPVARVPRIERARHGDAGGMRGAAFLHLTD</sequence>
<comment type="function">
    <text evidence="1">Catalyzes the phosphorylation of N-acetyl-D-glucosamine (GlcNAc) derived from cell-wall degradation, yielding GlcNAc-6-P.</text>
</comment>
<comment type="catalytic activity">
    <reaction evidence="1">
        <text>N-acetyl-D-glucosamine + ATP = N-acetyl-D-glucosamine 6-phosphate + ADP + H(+)</text>
        <dbReference type="Rhea" id="RHEA:17417"/>
        <dbReference type="ChEBI" id="CHEBI:15378"/>
        <dbReference type="ChEBI" id="CHEBI:30616"/>
        <dbReference type="ChEBI" id="CHEBI:57513"/>
        <dbReference type="ChEBI" id="CHEBI:456216"/>
        <dbReference type="ChEBI" id="CHEBI:506227"/>
        <dbReference type="EC" id="2.7.1.59"/>
    </reaction>
</comment>
<comment type="pathway">
    <text evidence="1">Cell wall biogenesis; peptidoglycan recycling.</text>
</comment>
<comment type="similarity">
    <text evidence="1">Belongs to the ROK (NagC/XylR) family. NagK subfamily.</text>
</comment>
<evidence type="ECO:0000255" key="1">
    <source>
        <dbReference type="HAMAP-Rule" id="MF_01271"/>
    </source>
</evidence>